<sequence>MKIKVLIVDDSALIRGVMREIINSQPDMEVVGVAPDPIAARELIKQTNPDVLTLDVEMPKMDGLEFLEKLMRLRPMPVVMVSSLTERGSEITMRALELGAVDFVTKPKMSIQSGMLEYTDLIADKIRIAARARIKPRTPHAQGGQSGTTLAAVRNPLTSSEKLIIIGASTGGTEAIKDFLMQLPPDSPGVLITQHMPEGFTRSFANRLDKLCKISVKEAEGGERVLPGHAYLAPGHSHLLLVRSGANYMTKLDQGPPVNRHRPSVDVLFNSAALTAGKNAVGVILTGMGKDGAAGMLEMKKAGGYNLAQDEASCVVFGMPKEAIAVGATHEVAPLHELPRRVLEFFAAHGERAMRV</sequence>
<keyword id="KW-0145">Chemotaxis</keyword>
<keyword id="KW-0963">Cytoplasm</keyword>
<keyword id="KW-0378">Hydrolase</keyword>
<keyword id="KW-0597">Phosphoprotein</keyword>
<keyword id="KW-1185">Reference proteome</keyword>
<comment type="function">
    <text evidence="1">Involved in chemotaxis. Part of a chemotaxis signal transduction system that modulates chemotaxis in response to various stimuli. Catalyzes the demethylation of specific methylglutamate residues introduced into the chemoreceptors (methyl-accepting chemotaxis proteins or MCP) by CheR. Also mediates the irreversible deamidation of specific glutamine residues to glutamic acid.</text>
</comment>
<comment type="catalytic activity">
    <reaction evidence="1">
        <text>[protein]-L-glutamate 5-O-methyl ester + H2O = L-glutamyl-[protein] + methanol + H(+)</text>
        <dbReference type="Rhea" id="RHEA:23236"/>
        <dbReference type="Rhea" id="RHEA-COMP:10208"/>
        <dbReference type="Rhea" id="RHEA-COMP:10311"/>
        <dbReference type="ChEBI" id="CHEBI:15377"/>
        <dbReference type="ChEBI" id="CHEBI:15378"/>
        <dbReference type="ChEBI" id="CHEBI:17790"/>
        <dbReference type="ChEBI" id="CHEBI:29973"/>
        <dbReference type="ChEBI" id="CHEBI:82795"/>
        <dbReference type="EC" id="3.1.1.61"/>
    </reaction>
</comment>
<comment type="catalytic activity">
    <reaction evidence="1">
        <text>L-glutaminyl-[protein] + H2O = L-glutamyl-[protein] + NH4(+)</text>
        <dbReference type="Rhea" id="RHEA:16441"/>
        <dbReference type="Rhea" id="RHEA-COMP:10207"/>
        <dbReference type="Rhea" id="RHEA-COMP:10208"/>
        <dbReference type="ChEBI" id="CHEBI:15377"/>
        <dbReference type="ChEBI" id="CHEBI:28938"/>
        <dbReference type="ChEBI" id="CHEBI:29973"/>
        <dbReference type="ChEBI" id="CHEBI:30011"/>
        <dbReference type="EC" id="3.5.1.44"/>
    </reaction>
</comment>
<comment type="subcellular location">
    <subcellularLocation>
        <location evidence="1">Cytoplasm</location>
    </subcellularLocation>
</comment>
<comment type="domain">
    <text evidence="1">Contains a C-terminal catalytic domain, and an N-terminal region which modulates catalytic activity.</text>
</comment>
<comment type="PTM">
    <text evidence="1">Phosphorylated by CheA. Phosphorylation of the N-terminal regulatory domain activates the methylesterase activity.</text>
</comment>
<comment type="similarity">
    <text evidence="1">Belongs to the CheB family.</text>
</comment>
<protein>
    <recommendedName>
        <fullName evidence="1">Protein-glutamate methylesterase/protein-glutamine glutaminase</fullName>
        <ecNumber evidence="1">3.1.1.61</ecNumber>
        <ecNumber evidence="1">3.5.1.44</ecNumber>
    </recommendedName>
</protein>
<proteinExistence type="inferred from homology"/>
<evidence type="ECO:0000255" key="1">
    <source>
        <dbReference type="HAMAP-Rule" id="MF_00099"/>
    </source>
</evidence>
<name>CHEB_THIDA</name>
<organism>
    <name type="scientific">Thiobacillus denitrificans (strain ATCC 25259 / T1)</name>
    <dbReference type="NCBI Taxonomy" id="292415"/>
    <lineage>
        <taxon>Bacteria</taxon>
        <taxon>Pseudomonadati</taxon>
        <taxon>Pseudomonadota</taxon>
        <taxon>Betaproteobacteria</taxon>
        <taxon>Nitrosomonadales</taxon>
        <taxon>Thiobacillaceae</taxon>
        <taxon>Thiobacillus</taxon>
    </lineage>
</organism>
<feature type="chain" id="PRO_0000225488" description="Protein-glutamate methylesterase/protein-glutamine glutaminase">
    <location>
        <begin position="1"/>
        <end position="356"/>
    </location>
</feature>
<feature type="domain" description="Response regulatory" evidence="1">
    <location>
        <begin position="4"/>
        <end position="121"/>
    </location>
</feature>
<feature type="domain" description="CheB-type methylesterase" evidence="1">
    <location>
        <begin position="156"/>
        <end position="349"/>
    </location>
</feature>
<feature type="active site" evidence="1">
    <location>
        <position position="169"/>
    </location>
</feature>
<feature type="active site" evidence="1">
    <location>
        <position position="195"/>
    </location>
</feature>
<feature type="active site" evidence="1">
    <location>
        <position position="291"/>
    </location>
</feature>
<feature type="modified residue" description="4-aspartylphosphate" evidence="1">
    <location>
        <position position="55"/>
    </location>
</feature>
<reference key="1">
    <citation type="journal article" date="2006" name="J. Bacteriol.">
        <title>The genome sequence of the obligately chemolithoautotrophic, facultatively anaerobic bacterium Thiobacillus denitrificans.</title>
        <authorList>
            <person name="Beller H.R."/>
            <person name="Chain P.S."/>
            <person name="Letain T.E."/>
            <person name="Chakicherla A."/>
            <person name="Larimer F.W."/>
            <person name="Richardson P.M."/>
            <person name="Coleman M.A."/>
            <person name="Wood A.P."/>
            <person name="Kelly D.P."/>
        </authorList>
    </citation>
    <scope>NUCLEOTIDE SEQUENCE [LARGE SCALE GENOMIC DNA]</scope>
    <source>
        <strain>ATCC 25259 / T1</strain>
    </source>
</reference>
<accession>Q3SIG0</accession>
<gene>
    <name evidence="1" type="primary">cheB</name>
    <name type="ordered locus">Tbd_1615</name>
</gene>
<dbReference type="EC" id="3.1.1.61" evidence="1"/>
<dbReference type="EC" id="3.5.1.44" evidence="1"/>
<dbReference type="EMBL" id="CP000116">
    <property type="protein sequence ID" value="AAZ97568.1"/>
    <property type="molecule type" value="Genomic_DNA"/>
</dbReference>
<dbReference type="RefSeq" id="WP_011312127.1">
    <property type="nucleotide sequence ID" value="NC_007404.1"/>
</dbReference>
<dbReference type="SMR" id="Q3SIG0"/>
<dbReference type="STRING" id="292415.Tbd_1615"/>
<dbReference type="KEGG" id="tbd:Tbd_1615"/>
<dbReference type="eggNOG" id="COG2201">
    <property type="taxonomic scope" value="Bacteria"/>
</dbReference>
<dbReference type="HOGENOM" id="CLU_000445_51_0_4"/>
<dbReference type="OrthoDB" id="9793421at2"/>
<dbReference type="Proteomes" id="UP000008291">
    <property type="component" value="Chromosome"/>
</dbReference>
<dbReference type="GO" id="GO:0005737">
    <property type="term" value="C:cytoplasm"/>
    <property type="evidence" value="ECO:0007669"/>
    <property type="project" value="UniProtKB-SubCell"/>
</dbReference>
<dbReference type="GO" id="GO:0000156">
    <property type="term" value="F:phosphorelay response regulator activity"/>
    <property type="evidence" value="ECO:0007669"/>
    <property type="project" value="InterPro"/>
</dbReference>
<dbReference type="GO" id="GO:0008984">
    <property type="term" value="F:protein-glutamate methylesterase activity"/>
    <property type="evidence" value="ECO:0007669"/>
    <property type="project" value="UniProtKB-UniRule"/>
</dbReference>
<dbReference type="GO" id="GO:0050568">
    <property type="term" value="F:protein-glutamine glutaminase activity"/>
    <property type="evidence" value="ECO:0007669"/>
    <property type="project" value="UniProtKB-UniRule"/>
</dbReference>
<dbReference type="GO" id="GO:0006935">
    <property type="term" value="P:chemotaxis"/>
    <property type="evidence" value="ECO:0007669"/>
    <property type="project" value="UniProtKB-UniRule"/>
</dbReference>
<dbReference type="CDD" id="cd16432">
    <property type="entry name" value="CheB_Rec"/>
    <property type="match status" value="1"/>
</dbReference>
<dbReference type="CDD" id="cd17541">
    <property type="entry name" value="REC_CheB-like"/>
    <property type="match status" value="1"/>
</dbReference>
<dbReference type="FunFam" id="3.40.50.2300:FF:000060">
    <property type="entry name" value="Protein-glutamate methylesterase/protein-glutamine glutaminase"/>
    <property type="match status" value="1"/>
</dbReference>
<dbReference type="Gene3D" id="3.40.50.2300">
    <property type="match status" value="1"/>
</dbReference>
<dbReference type="Gene3D" id="3.40.50.180">
    <property type="entry name" value="Methylesterase CheB, C-terminal domain"/>
    <property type="match status" value="1"/>
</dbReference>
<dbReference type="HAMAP" id="MF_00099">
    <property type="entry name" value="CheB_chemtxs"/>
    <property type="match status" value="1"/>
</dbReference>
<dbReference type="InterPro" id="IPR008248">
    <property type="entry name" value="CheB-like"/>
</dbReference>
<dbReference type="InterPro" id="IPR035909">
    <property type="entry name" value="CheB_C"/>
</dbReference>
<dbReference type="InterPro" id="IPR011006">
    <property type="entry name" value="CheY-like_superfamily"/>
</dbReference>
<dbReference type="InterPro" id="IPR000673">
    <property type="entry name" value="Sig_transdc_resp-reg_Me-estase"/>
</dbReference>
<dbReference type="InterPro" id="IPR001789">
    <property type="entry name" value="Sig_transdc_resp-reg_receiver"/>
</dbReference>
<dbReference type="NCBIfam" id="NF001965">
    <property type="entry name" value="PRK00742.1"/>
    <property type="match status" value="1"/>
</dbReference>
<dbReference type="NCBIfam" id="NF009206">
    <property type="entry name" value="PRK12555.1"/>
    <property type="match status" value="1"/>
</dbReference>
<dbReference type="PANTHER" id="PTHR42872">
    <property type="entry name" value="PROTEIN-GLUTAMATE METHYLESTERASE/PROTEIN-GLUTAMINE GLUTAMINASE"/>
    <property type="match status" value="1"/>
</dbReference>
<dbReference type="PANTHER" id="PTHR42872:SF6">
    <property type="entry name" value="PROTEIN-GLUTAMATE METHYLESTERASE_PROTEIN-GLUTAMINE GLUTAMINASE"/>
    <property type="match status" value="1"/>
</dbReference>
<dbReference type="Pfam" id="PF01339">
    <property type="entry name" value="CheB_methylest"/>
    <property type="match status" value="1"/>
</dbReference>
<dbReference type="Pfam" id="PF00072">
    <property type="entry name" value="Response_reg"/>
    <property type="match status" value="1"/>
</dbReference>
<dbReference type="PIRSF" id="PIRSF000876">
    <property type="entry name" value="RR_chemtxs_CheB"/>
    <property type="match status" value="1"/>
</dbReference>
<dbReference type="SMART" id="SM00448">
    <property type="entry name" value="REC"/>
    <property type="match status" value="1"/>
</dbReference>
<dbReference type="SUPFAM" id="SSF52172">
    <property type="entry name" value="CheY-like"/>
    <property type="match status" value="1"/>
</dbReference>
<dbReference type="SUPFAM" id="SSF52738">
    <property type="entry name" value="Methylesterase CheB, C-terminal domain"/>
    <property type="match status" value="1"/>
</dbReference>
<dbReference type="PROSITE" id="PS50122">
    <property type="entry name" value="CHEB"/>
    <property type="match status" value="1"/>
</dbReference>
<dbReference type="PROSITE" id="PS50110">
    <property type="entry name" value="RESPONSE_REGULATORY"/>
    <property type="match status" value="1"/>
</dbReference>